<keyword id="KW-0687">Ribonucleoprotein</keyword>
<keyword id="KW-0689">Ribosomal protein</keyword>
<evidence type="ECO:0000255" key="1">
    <source>
        <dbReference type="HAMAP-Rule" id="MF_00539"/>
    </source>
</evidence>
<evidence type="ECO:0000256" key="2">
    <source>
        <dbReference type="SAM" id="MobiDB-lite"/>
    </source>
</evidence>
<evidence type="ECO:0000305" key="3"/>
<reference key="1">
    <citation type="journal article" date="2004" name="Proc. Natl. Acad. Sci. U.S.A.">
        <title>The louse-borne human pathogen Bartonella quintana is a genomic derivative of the zoonotic agent Bartonella henselae.</title>
        <authorList>
            <person name="Alsmark U.C.M."/>
            <person name="Frank A.C."/>
            <person name="Karlberg E.O."/>
            <person name="Legault B.-A."/>
            <person name="Ardell D.H."/>
            <person name="Canbaeck B."/>
            <person name="Eriksson A.-S."/>
            <person name="Naeslund A.K."/>
            <person name="Handley S.A."/>
            <person name="Huvet M."/>
            <person name="La Scola B."/>
            <person name="Holmberg M."/>
            <person name="Andersson S.G.E."/>
        </authorList>
    </citation>
    <scope>NUCLEOTIDE SEQUENCE [LARGE SCALE GENOMIC DNA]</scope>
    <source>
        <strain>ATCC 49882 / DSM 28221 / CCUG 30454 / Houston 1</strain>
    </source>
</reference>
<organism>
    <name type="scientific">Bartonella henselae (strain ATCC 49882 / DSM 28221 / CCUG 30454 / Houston 1)</name>
    <name type="common">Rochalimaea henselae</name>
    <dbReference type="NCBI Taxonomy" id="283166"/>
    <lineage>
        <taxon>Bacteria</taxon>
        <taxon>Pseudomonadati</taxon>
        <taxon>Pseudomonadota</taxon>
        <taxon>Alphaproteobacteria</taxon>
        <taxon>Hyphomicrobiales</taxon>
        <taxon>Bartonellaceae</taxon>
        <taxon>Bartonella</taxon>
    </lineage>
</organism>
<name>RL27_BARHE</name>
<gene>
    <name evidence="1" type="primary">rpmA</name>
    <name type="ordered locus">BH01400</name>
</gene>
<dbReference type="EMBL" id="BX897699">
    <property type="protein sequence ID" value="CAF26953.1"/>
    <property type="molecule type" value="Genomic_DNA"/>
</dbReference>
<dbReference type="RefSeq" id="WP_011180094.1">
    <property type="nucleotide sequence ID" value="NZ_LRIJ02000001.1"/>
</dbReference>
<dbReference type="SMR" id="Q6G507"/>
<dbReference type="PaxDb" id="283166-BH01400"/>
<dbReference type="EnsemblBacteria" id="CAF26953">
    <property type="protein sequence ID" value="CAF26953"/>
    <property type="gene ID" value="BH01400"/>
</dbReference>
<dbReference type="GeneID" id="92986425"/>
<dbReference type="KEGG" id="bhe:BH01400"/>
<dbReference type="eggNOG" id="COG0211">
    <property type="taxonomic scope" value="Bacteria"/>
</dbReference>
<dbReference type="OrthoDB" id="9803474at2"/>
<dbReference type="Proteomes" id="UP000000421">
    <property type="component" value="Chromosome"/>
</dbReference>
<dbReference type="GO" id="GO:0022625">
    <property type="term" value="C:cytosolic large ribosomal subunit"/>
    <property type="evidence" value="ECO:0007669"/>
    <property type="project" value="TreeGrafter"/>
</dbReference>
<dbReference type="GO" id="GO:0003735">
    <property type="term" value="F:structural constituent of ribosome"/>
    <property type="evidence" value="ECO:0007669"/>
    <property type="project" value="InterPro"/>
</dbReference>
<dbReference type="GO" id="GO:0006412">
    <property type="term" value="P:translation"/>
    <property type="evidence" value="ECO:0007669"/>
    <property type="project" value="UniProtKB-UniRule"/>
</dbReference>
<dbReference type="FunFam" id="2.40.50.100:FF:000001">
    <property type="entry name" value="50S ribosomal protein L27"/>
    <property type="match status" value="1"/>
</dbReference>
<dbReference type="Gene3D" id="2.40.50.100">
    <property type="match status" value="1"/>
</dbReference>
<dbReference type="HAMAP" id="MF_00539">
    <property type="entry name" value="Ribosomal_bL27"/>
    <property type="match status" value="1"/>
</dbReference>
<dbReference type="InterPro" id="IPR001684">
    <property type="entry name" value="Ribosomal_bL27"/>
</dbReference>
<dbReference type="InterPro" id="IPR018261">
    <property type="entry name" value="Ribosomal_bL27_CS"/>
</dbReference>
<dbReference type="NCBIfam" id="TIGR00062">
    <property type="entry name" value="L27"/>
    <property type="match status" value="1"/>
</dbReference>
<dbReference type="PANTHER" id="PTHR15893:SF0">
    <property type="entry name" value="LARGE RIBOSOMAL SUBUNIT PROTEIN BL27M"/>
    <property type="match status" value="1"/>
</dbReference>
<dbReference type="PANTHER" id="PTHR15893">
    <property type="entry name" value="RIBOSOMAL PROTEIN L27"/>
    <property type="match status" value="1"/>
</dbReference>
<dbReference type="Pfam" id="PF01016">
    <property type="entry name" value="Ribosomal_L27"/>
    <property type="match status" value="1"/>
</dbReference>
<dbReference type="PRINTS" id="PR00063">
    <property type="entry name" value="RIBOSOMALL27"/>
</dbReference>
<dbReference type="SUPFAM" id="SSF110324">
    <property type="entry name" value="Ribosomal L27 protein-like"/>
    <property type="match status" value="1"/>
</dbReference>
<dbReference type="PROSITE" id="PS00831">
    <property type="entry name" value="RIBOSOMAL_L27"/>
    <property type="match status" value="1"/>
</dbReference>
<comment type="similarity">
    <text evidence="1">Belongs to the bacterial ribosomal protein bL27 family.</text>
</comment>
<proteinExistence type="inferred from homology"/>
<feature type="chain" id="PRO_0000181046" description="Large ribosomal subunit protein bL27">
    <location>
        <begin position="1"/>
        <end position="89"/>
    </location>
</feature>
<feature type="region of interest" description="Disordered" evidence="2">
    <location>
        <begin position="1"/>
        <end position="22"/>
    </location>
</feature>
<protein>
    <recommendedName>
        <fullName evidence="1">Large ribosomal subunit protein bL27</fullName>
    </recommendedName>
    <alternativeName>
        <fullName evidence="3">50S ribosomal protein L27</fullName>
    </alternativeName>
</protein>
<accession>Q6G507</accession>
<sequence>MAHKKAGGSSRNGRDSESKRLGVKKFGGEAVIAGNIIVRQRGTRWHPGDNVGIGKDHTLFALSKGMVSFQRKANNRSYVSVIPVVETVE</sequence>